<dbReference type="EC" id="2.8.1.-" evidence="1"/>
<dbReference type="EMBL" id="BX571965">
    <property type="protein sequence ID" value="CAH34303.1"/>
    <property type="molecule type" value="Genomic_DNA"/>
</dbReference>
<dbReference type="RefSeq" id="WP_004189298.1">
    <property type="nucleotide sequence ID" value="NZ_CP009538.1"/>
</dbReference>
<dbReference type="RefSeq" id="YP_106941.1">
    <property type="nucleotide sequence ID" value="NC_006350.1"/>
</dbReference>
<dbReference type="SMR" id="Q63Y74"/>
<dbReference type="STRING" id="272560.BPSL0314"/>
<dbReference type="GeneID" id="93058831"/>
<dbReference type="KEGG" id="bps:BPSL0314"/>
<dbReference type="PATRIC" id="fig|272560.51.peg.1373"/>
<dbReference type="eggNOG" id="COG0037">
    <property type="taxonomic scope" value="Bacteria"/>
</dbReference>
<dbReference type="Proteomes" id="UP000000605">
    <property type="component" value="Chromosome 1"/>
</dbReference>
<dbReference type="GO" id="GO:0005737">
    <property type="term" value="C:cytoplasm"/>
    <property type="evidence" value="ECO:0007669"/>
    <property type="project" value="UniProtKB-SubCell"/>
</dbReference>
<dbReference type="GO" id="GO:0051539">
    <property type="term" value="F:4 iron, 4 sulfur cluster binding"/>
    <property type="evidence" value="ECO:0007669"/>
    <property type="project" value="UniProtKB-UniRule"/>
</dbReference>
<dbReference type="GO" id="GO:0005524">
    <property type="term" value="F:ATP binding"/>
    <property type="evidence" value="ECO:0007669"/>
    <property type="project" value="UniProtKB-UniRule"/>
</dbReference>
<dbReference type="GO" id="GO:0000287">
    <property type="term" value="F:magnesium ion binding"/>
    <property type="evidence" value="ECO:0007669"/>
    <property type="project" value="UniProtKB-UniRule"/>
</dbReference>
<dbReference type="GO" id="GO:0016783">
    <property type="term" value="F:sulfurtransferase activity"/>
    <property type="evidence" value="ECO:0007669"/>
    <property type="project" value="UniProtKB-UniRule"/>
</dbReference>
<dbReference type="GO" id="GO:0000049">
    <property type="term" value="F:tRNA binding"/>
    <property type="evidence" value="ECO:0007669"/>
    <property type="project" value="UniProtKB-KW"/>
</dbReference>
<dbReference type="GO" id="GO:0034227">
    <property type="term" value="P:tRNA thio-modification"/>
    <property type="evidence" value="ECO:0007669"/>
    <property type="project" value="UniProtKB-UniRule"/>
</dbReference>
<dbReference type="CDD" id="cd24138">
    <property type="entry name" value="TtcA-like"/>
    <property type="match status" value="1"/>
</dbReference>
<dbReference type="Gene3D" id="3.40.50.620">
    <property type="entry name" value="HUPs"/>
    <property type="match status" value="1"/>
</dbReference>
<dbReference type="HAMAP" id="MF_01850">
    <property type="entry name" value="TtcA"/>
    <property type="match status" value="1"/>
</dbReference>
<dbReference type="InterPro" id="IPR014729">
    <property type="entry name" value="Rossmann-like_a/b/a_fold"/>
</dbReference>
<dbReference type="InterPro" id="IPR011063">
    <property type="entry name" value="TilS/TtcA_N"/>
</dbReference>
<dbReference type="InterPro" id="IPR012089">
    <property type="entry name" value="tRNA_Cyd_32_2_STrfase"/>
</dbReference>
<dbReference type="NCBIfam" id="NF007972">
    <property type="entry name" value="PRK10696.1"/>
    <property type="match status" value="1"/>
</dbReference>
<dbReference type="PANTHER" id="PTHR43686:SF1">
    <property type="entry name" value="AMINOTRAN_5 DOMAIN-CONTAINING PROTEIN"/>
    <property type="match status" value="1"/>
</dbReference>
<dbReference type="PANTHER" id="PTHR43686">
    <property type="entry name" value="SULFURTRANSFERASE-RELATED"/>
    <property type="match status" value="1"/>
</dbReference>
<dbReference type="Pfam" id="PF01171">
    <property type="entry name" value="ATP_bind_3"/>
    <property type="match status" value="1"/>
</dbReference>
<dbReference type="SUPFAM" id="SSF52402">
    <property type="entry name" value="Adenine nucleotide alpha hydrolases-like"/>
    <property type="match status" value="1"/>
</dbReference>
<keyword id="KW-0004">4Fe-4S</keyword>
<keyword id="KW-0067">ATP-binding</keyword>
<keyword id="KW-0963">Cytoplasm</keyword>
<keyword id="KW-0408">Iron</keyword>
<keyword id="KW-0411">Iron-sulfur</keyword>
<keyword id="KW-0460">Magnesium</keyword>
<keyword id="KW-0479">Metal-binding</keyword>
<keyword id="KW-0547">Nucleotide-binding</keyword>
<keyword id="KW-1185">Reference proteome</keyword>
<keyword id="KW-0694">RNA-binding</keyword>
<keyword id="KW-0808">Transferase</keyword>
<keyword id="KW-0819">tRNA processing</keyword>
<keyword id="KW-0820">tRNA-binding</keyword>
<reference key="1">
    <citation type="journal article" date="2004" name="Proc. Natl. Acad. Sci. U.S.A.">
        <title>Genomic plasticity of the causative agent of melioidosis, Burkholderia pseudomallei.</title>
        <authorList>
            <person name="Holden M.T.G."/>
            <person name="Titball R.W."/>
            <person name="Peacock S.J."/>
            <person name="Cerdeno-Tarraga A.-M."/>
            <person name="Atkins T."/>
            <person name="Crossman L.C."/>
            <person name="Pitt T."/>
            <person name="Churcher C."/>
            <person name="Mungall K.L."/>
            <person name="Bentley S.D."/>
            <person name="Sebaihia M."/>
            <person name="Thomson N.R."/>
            <person name="Bason N."/>
            <person name="Beacham I.R."/>
            <person name="Brooks K."/>
            <person name="Brown K.A."/>
            <person name="Brown N.F."/>
            <person name="Challis G.L."/>
            <person name="Cherevach I."/>
            <person name="Chillingworth T."/>
            <person name="Cronin A."/>
            <person name="Crossett B."/>
            <person name="Davis P."/>
            <person name="DeShazer D."/>
            <person name="Feltwell T."/>
            <person name="Fraser A."/>
            <person name="Hance Z."/>
            <person name="Hauser H."/>
            <person name="Holroyd S."/>
            <person name="Jagels K."/>
            <person name="Keith K.E."/>
            <person name="Maddison M."/>
            <person name="Moule S."/>
            <person name="Price C."/>
            <person name="Quail M.A."/>
            <person name="Rabbinowitsch E."/>
            <person name="Rutherford K."/>
            <person name="Sanders M."/>
            <person name="Simmonds M."/>
            <person name="Songsivilai S."/>
            <person name="Stevens K."/>
            <person name="Tumapa S."/>
            <person name="Vesaratchavest M."/>
            <person name="Whitehead S."/>
            <person name="Yeats C."/>
            <person name="Barrell B.G."/>
            <person name="Oyston P.C.F."/>
            <person name="Parkhill J."/>
        </authorList>
    </citation>
    <scope>NUCLEOTIDE SEQUENCE [LARGE SCALE GENOMIC DNA]</scope>
    <source>
        <strain>K96243</strain>
    </source>
</reference>
<protein>
    <recommendedName>
        <fullName evidence="1">tRNA-cytidine(32) 2-sulfurtransferase</fullName>
        <ecNumber evidence="1">2.8.1.-</ecNumber>
    </recommendedName>
    <alternativeName>
        <fullName evidence="1">Two-thiocytidine biosynthesis protein A</fullName>
    </alternativeName>
    <alternativeName>
        <fullName evidence="1">tRNA 2-thiocytidine biosynthesis protein TtcA</fullName>
    </alternativeName>
</protein>
<organism>
    <name type="scientific">Burkholderia pseudomallei (strain K96243)</name>
    <dbReference type="NCBI Taxonomy" id="272560"/>
    <lineage>
        <taxon>Bacteria</taxon>
        <taxon>Pseudomonadati</taxon>
        <taxon>Pseudomonadota</taxon>
        <taxon>Betaproteobacteria</taxon>
        <taxon>Burkholderiales</taxon>
        <taxon>Burkholderiaceae</taxon>
        <taxon>Burkholderia</taxon>
        <taxon>pseudomallei group</taxon>
    </lineage>
</organism>
<comment type="function">
    <text evidence="1">Catalyzes the ATP-dependent 2-thiolation of cytidine in position 32 of tRNA, to form 2-thiocytidine (s(2)C32). The sulfur atoms are provided by the cysteine/cysteine desulfurase (IscS) system.</text>
</comment>
<comment type="catalytic activity">
    <reaction evidence="1">
        <text>cytidine(32) in tRNA + S-sulfanyl-L-cysteinyl-[cysteine desulfurase] + AH2 + ATP = 2-thiocytidine(32) in tRNA + L-cysteinyl-[cysteine desulfurase] + A + AMP + diphosphate + H(+)</text>
        <dbReference type="Rhea" id="RHEA:57048"/>
        <dbReference type="Rhea" id="RHEA-COMP:10288"/>
        <dbReference type="Rhea" id="RHEA-COMP:12157"/>
        <dbReference type="Rhea" id="RHEA-COMP:12158"/>
        <dbReference type="Rhea" id="RHEA-COMP:14821"/>
        <dbReference type="ChEBI" id="CHEBI:13193"/>
        <dbReference type="ChEBI" id="CHEBI:15378"/>
        <dbReference type="ChEBI" id="CHEBI:17499"/>
        <dbReference type="ChEBI" id="CHEBI:29950"/>
        <dbReference type="ChEBI" id="CHEBI:30616"/>
        <dbReference type="ChEBI" id="CHEBI:33019"/>
        <dbReference type="ChEBI" id="CHEBI:61963"/>
        <dbReference type="ChEBI" id="CHEBI:82748"/>
        <dbReference type="ChEBI" id="CHEBI:141453"/>
        <dbReference type="ChEBI" id="CHEBI:456215"/>
    </reaction>
    <physiologicalReaction direction="left-to-right" evidence="1">
        <dbReference type="Rhea" id="RHEA:57049"/>
    </physiologicalReaction>
</comment>
<comment type="cofactor">
    <cofactor evidence="1">
        <name>Mg(2+)</name>
        <dbReference type="ChEBI" id="CHEBI:18420"/>
    </cofactor>
</comment>
<comment type="cofactor">
    <cofactor evidence="1">
        <name>[4Fe-4S] cluster</name>
        <dbReference type="ChEBI" id="CHEBI:49883"/>
    </cofactor>
    <text evidence="1">Binds 1 [4Fe-4S] cluster per subunit. The cluster is chelated by three Cys residues, the fourth Fe has a free coordination site that may bind a sulfur atom transferred from the persulfide of IscS.</text>
</comment>
<comment type="pathway">
    <text evidence="1">tRNA modification.</text>
</comment>
<comment type="subunit">
    <text evidence="1">Homodimer.</text>
</comment>
<comment type="subcellular location">
    <subcellularLocation>
        <location evidence="1">Cytoplasm</location>
    </subcellularLocation>
</comment>
<comment type="miscellaneous">
    <text evidence="1">The thiolation reaction likely consists of two steps: a first activation step by ATP to form an adenylated intermediate of the target base of tRNA, and a second nucleophilic substitution step of the sulfur (S) atom supplied by the hydrosulfide attached to the Fe-S cluster.</text>
</comment>
<comment type="similarity">
    <text evidence="1">Belongs to the TtcA family.</text>
</comment>
<evidence type="ECO:0000255" key="1">
    <source>
        <dbReference type="HAMAP-Rule" id="MF_01850"/>
    </source>
</evidence>
<sequence>MNAPHTPHLNEAEAAAAVEANAAELGRRALTRREQKEAYENNKLFKRLVRQVGQAIGDYNMIEHGDKVMVCLSGGKDSYALLDILLRLRERAPIDFDIVAVNLDQKQPGFPEHVLPEYLTKIGVPFHIENQDTYSIVKRLVPEGKTTCSLCSRLRRGILYRVAGELGATKIALGHHRDDIVQTLLLNMFYGGKLKGMPPKLQSDDGKNIVIRPLAYAKETDLEKYAELREFPIIPCNLCGSQPNLKRAEMKALIRDWDKRFPGRVDNMFNALANVVPSHLMDARLFPFAGLRATGEADPNGDIAFDEDPCGTDASAPGGAKSVSIVQFDDL</sequence>
<feature type="chain" id="PRO_0000348691" description="tRNA-cytidine(32) 2-sulfurtransferase">
    <location>
        <begin position="1"/>
        <end position="331"/>
    </location>
</feature>
<feature type="short sequence motif" description="PP-loop motif" evidence="1">
    <location>
        <begin position="73"/>
        <end position="78"/>
    </location>
</feature>
<feature type="binding site" evidence="1">
    <location>
        <position position="148"/>
    </location>
    <ligand>
        <name>[4Fe-4S] cluster</name>
        <dbReference type="ChEBI" id="CHEBI:49883"/>
    </ligand>
</feature>
<feature type="binding site" evidence="1">
    <location>
        <position position="151"/>
    </location>
    <ligand>
        <name>[4Fe-4S] cluster</name>
        <dbReference type="ChEBI" id="CHEBI:49883"/>
    </ligand>
</feature>
<feature type="binding site" evidence="1">
    <location>
        <position position="239"/>
    </location>
    <ligand>
        <name>[4Fe-4S] cluster</name>
        <dbReference type="ChEBI" id="CHEBI:49883"/>
    </ligand>
</feature>
<gene>
    <name evidence="1" type="primary">ttcA</name>
    <name type="ordered locus">BPSL0314</name>
</gene>
<accession>Q63Y74</accession>
<name>TTCA_BURPS</name>
<proteinExistence type="inferred from homology"/>